<evidence type="ECO:0000255" key="1">
    <source>
        <dbReference type="HAMAP-Rule" id="MF_01643"/>
    </source>
</evidence>
<dbReference type="EC" id="6.3.1.21" evidence="1"/>
<dbReference type="EMBL" id="BX640450">
    <property type="protein sequence ID" value="CAE34863.1"/>
    <property type="molecule type" value="Genomic_DNA"/>
</dbReference>
<dbReference type="RefSeq" id="WP_003815170.1">
    <property type="nucleotide sequence ID" value="NC_002927.3"/>
</dbReference>
<dbReference type="SMR" id="Q7WEY0"/>
<dbReference type="GeneID" id="56477001"/>
<dbReference type="KEGG" id="bbr:BB4500"/>
<dbReference type="eggNOG" id="COG0027">
    <property type="taxonomic scope" value="Bacteria"/>
</dbReference>
<dbReference type="HOGENOM" id="CLU_011534_1_3_4"/>
<dbReference type="UniPathway" id="UPA00074">
    <property type="reaction ID" value="UER00127"/>
</dbReference>
<dbReference type="Proteomes" id="UP000001027">
    <property type="component" value="Chromosome"/>
</dbReference>
<dbReference type="GO" id="GO:0005829">
    <property type="term" value="C:cytosol"/>
    <property type="evidence" value="ECO:0007669"/>
    <property type="project" value="TreeGrafter"/>
</dbReference>
<dbReference type="GO" id="GO:0005524">
    <property type="term" value="F:ATP binding"/>
    <property type="evidence" value="ECO:0007669"/>
    <property type="project" value="UniProtKB-UniRule"/>
</dbReference>
<dbReference type="GO" id="GO:0000287">
    <property type="term" value="F:magnesium ion binding"/>
    <property type="evidence" value="ECO:0007669"/>
    <property type="project" value="InterPro"/>
</dbReference>
<dbReference type="GO" id="GO:0043815">
    <property type="term" value="F:phosphoribosylglycinamide formyltransferase 2 activity"/>
    <property type="evidence" value="ECO:0007669"/>
    <property type="project" value="UniProtKB-UniRule"/>
</dbReference>
<dbReference type="GO" id="GO:0004644">
    <property type="term" value="F:phosphoribosylglycinamide formyltransferase activity"/>
    <property type="evidence" value="ECO:0007669"/>
    <property type="project" value="InterPro"/>
</dbReference>
<dbReference type="GO" id="GO:0006189">
    <property type="term" value="P:'de novo' IMP biosynthetic process"/>
    <property type="evidence" value="ECO:0007669"/>
    <property type="project" value="UniProtKB-UniRule"/>
</dbReference>
<dbReference type="FunFam" id="3.30.1490.20:FF:000013">
    <property type="entry name" value="Formate-dependent phosphoribosylglycinamide formyltransferase"/>
    <property type="match status" value="1"/>
</dbReference>
<dbReference type="FunFam" id="3.40.50.20:FF:000007">
    <property type="entry name" value="Formate-dependent phosphoribosylglycinamide formyltransferase"/>
    <property type="match status" value="1"/>
</dbReference>
<dbReference type="Gene3D" id="3.40.50.20">
    <property type="match status" value="1"/>
</dbReference>
<dbReference type="Gene3D" id="3.30.1490.20">
    <property type="entry name" value="ATP-grasp fold, A domain"/>
    <property type="match status" value="1"/>
</dbReference>
<dbReference type="Gene3D" id="3.30.470.20">
    <property type="entry name" value="ATP-grasp fold, B domain"/>
    <property type="match status" value="1"/>
</dbReference>
<dbReference type="HAMAP" id="MF_01643">
    <property type="entry name" value="PurT"/>
    <property type="match status" value="1"/>
</dbReference>
<dbReference type="InterPro" id="IPR011761">
    <property type="entry name" value="ATP-grasp"/>
</dbReference>
<dbReference type="InterPro" id="IPR003135">
    <property type="entry name" value="ATP-grasp_carboxylate-amine"/>
</dbReference>
<dbReference type="InterPro" id="IPR013815">
    <property type="entry name" value="ATP_grasp_subdomain_1"/>
</dbReference>
<dbReference type="InterPro" id="IPR016185">
    <property type="entry name" value="PreATP-grasp_dom_sf"/>
</dbReference>
<dbReference type="InterPro" id="IPR005862">
    <property type="entry name" value="PurT"/>
</dbReference>
<dbReference type="InterPro" id="IPR054350">
    <property type="entry name" value="PurT/PurK_preATP-grasp"/>
</dbReference>
<dbReference type="InterPro" id="IPR048740">
    <property type="entry name" value="PurT_C"/>
</dbReference>
<dbReference type="InterPro" id="IPR011054">
    <property type="entry name" value="Rudment_hybrid_motif"/>
</dbReference>
<dbReference type="NCBIfam" id="NF006766">
    <property type="entry name" value="PRK09288.1"/>
    <property type="match status" value="1"/>
</dbReference>
<dbReference type="NCBIfam" id="TIGR01142">
    <property type="entry name" value="purT"/>
    <property type="match status" value="1"/>
</dbReference>
<dbReference type="PANTHER" id="PTHR43055">
    <property type="entry name" value="FORMATE-DEPENDENT PHOSPHORIBOSYLGLYCINAMIDE FORMYLTRANSFERASE"/>
    <property type="match status" value="1"/>
</dbReference>
<dbReference type="PANTHER" id="PTHR43055:SF1">
    <property type="entry name" value="FORMATE-DEPENDENT PHOSPHORIBOSYLGLYCINAMIDE FORMYLTRANSFERASE"/>
    <property type="match status" value="1"/>
</dbReference>
<dbReference type="Pfam" id="PF02222">
    <property type="entry name" value="ATP-grasp"/>
    <property type="match status" value="1"/>
</dbReference>
<dbReference type="Pfam" id="PF21244">
    <property type="entry name" value="PurT_C"/>
    <property type="match status" value="1"/>
</dbReference>
<dbReference type="Pfam" id="PF22660">
    <property type="entry name" value="RS_preATP-grasp-like"/>
    <property type="match status" value="1"/>
</dbReference>
<dbReference type="SUPFAM" id="SSF56059">
    <property type="entry name" value="Glutathione synthetase ATP-binding domain-like"/>
    <property type="match status" value="1"/>
</dbReference>
<dbReference type="SUPFAM" id="SSF52440">
    <property type="entry name" value="PreATP-grasp domain"/>
    <property type="match status" value="1"/>
</dbReference>
<dbReference type="SUPFAM" id="SSF51246">
    <property type="entry name" value="Rudiment single hybrid motif"/>
    <property type="match status" value="1"/>
</dbReference>
<dbReference type="PROSITE" id="PS50975">
    <property type="entry name" value="ATP_GRASP"/>
    <property type="match status" value="1"/>
</dbReference>
<gene>
    <name evidence="1" type="primary">purT</name>
    <name type="ordered locus">BB4500</name>
</gene>
<proteinExistence type="inferred from homology"/>
<comment type="function">
    <text evidence="1">Involved in the de novo purine biosynthesis. Catalyzes the transfer of formate to 5-phospho-ribosyl-glycinamide (GAR), producing 5-phospho-ribosyl-N-formylglycinamide (FGAR). Formate is provided by PurU via hydrolysis of 10-formyl-tetrahydrofolate.</text>
</comment>
<comment type="catalytic activity">
    <reaction evidence="1">
        <text>N(1)-(5-phospho-beta-D-ribosyl)glycinamide + formate + ATP = N(2)-formyl-N(1)-(5-phospho-beta-D-ribosyl)glycinamide + ADP + phosphate + H(+)</text>
        <dbReference type="Rhea" id="RHEA:24829"/>
        <dbReference type="ChEBI" id="CHEBI:15378"/>
        <dbReference type="ChEBI" id="CHEBI:15740"/>
        <dbReference type="ChEBI" id="CHEBI:30616"/>
        <dbReference type="ChEBI" id="CHEBI:43474"/>
        <dbReference type="ChEBI" id="CHEBI:143788"/>
        <dbReference type="ChEBI" id="CHEBI:147286"/>
        <dbReference type="ChEBI" id="CHEBI:456216"/>
        <dbReference type="EC" id="6.3.1.21"/>
    </reaction>
    <physiologicalReaction direction="left-to-right" evidence="1">
        <dbReference type="Rhea" id="RHEA:24830"/>
    </physiologicalReaction>
</comment>
<comment type="pathway">
    <text evidence="1">Purine metabolism; IMP biosynthesis via de novo pathway; N(2)-formyl-N(1)-(5-phospho-D-ribosyl)glycinamide from N(1)-(5-phospho-D-ribosyl)glycinamide (formate route): step 1/1.</text>
</comment>
<comment type="subunit">
    <text evidence="1">Homodimer.</text>
</comment>
<comment type="similarity">
    <text evidence="1">Belongs to the PurK/PurT family.</text>
</comment>
<organism>
    <name type="scientific">Bordetella bronchiseptica (strain ATCC BAA-588 / NCTC 13252 / RB50)</name>
    <name type="common">Alcaligenes bronchisepticus</name>
    <dbReference type="NCBI Taxonomy" id="257310"/>
    <lineage>
        <taxon>Bacteria</taxon>
        <taxon>Pseudomonadati</taxon>
        <taxon>Pseudomonadota</taxon>
        <taxon>Betaproteobacteria</taxon>
        <taxon>Burkholderiales</taxon>
        <taxon>Alcaligenaceae</taxon>
        <taxon>Bordetella</taxon>
    </lineage>
</organism>
<keyword id="KW-0067">ATP-binding</keyword>
<keyword id="KW-0436">Ligase</keyword>
<keyword id="KW-0460">Magnesium</keyword>
<keyword id="KW-0479">Metal-binding</keyword>
<keyword id="KW-0547">Nucleotide-binding</keyword>
<keyword id="KW-0658">Purine biosynthesis</keyword>
<name>PURT_BORBR</name>
<feature type="chain" id="PRO_0000319131" description="Formate-dependent phosphoribosylglycinamide formyltransferase">
    <location>
        <begin position="1"/>
        <end position="406"/>
    </location>
</feature>
<feature type="domain" description="ATP-grasp" evidence="1">
    <location>
        <begin position="125"/>
        <end position="320"/>
    </location>
</feature>
<feature type="binding site" evidence="1">
    <location>
        <begin position="27"/>
        <end position="28"/>
    </location>
    <ligand>
        <name>N(1)-(5-phospho-beta-D-ribosyl)glycinamide</name>
        <dbReference type="ChEBI" id="CHEBI:143788"/>
    </ligand>
</feature>
<feature type="binding site" evidence="1">
    <location>
        <position position="87"/>
    </location>
    <ligand>
        <name>N(1)-(5-phospho-beta-D-ribosyl)glycinamide</name>
        <dbReference type="ChEBI" id="CHEBI:143788"/>
    </ligand>
</feature>
<feature type="binding site" evidence="1">
    <location>
        <position position="120"/>
    </location>
    <ligand>
        <name>ATP</name>
        <dbReference type="ChEBI" id="CHEBI:30616"/>
    </ligand>
</feature>
<feature type="binding site" evidence="1">
    <location>
        <position position="162"/>
    </location>
    <ligand>
        <name>ATP</name>
        <dbReference type="ChEBI" id="CHEBI:30616"/>
    </ligand>
</feature>
<feature type="binding site" evidence="1">
    <location>
        <begin position="167"/>
        <end position="172"/>
    </location>
    <ligand>
        <name>ATP</name>
        <dbReference type="ChEBI" id="CHEBI:30616"/>
    </ligand>
</feature>
<feature type="binding site" evidence="1">
    <location>
        <begin position="202"/>
        <end position="205"/>
    </location>
    <ligand>
        <name>ATP</name>
        <dbReference type="ChEBI" id="CHEBI:30616"/>
    </ligand>
</feature>
<feature type="binding site" evidence="1">
    <location>
        <position position="210"/>
    </location>
    <ligand>
        <name>ATP</name>
        <dbReference type="ChEBI" id="CHEBI:30616"/>
    </ligand>
</feature>
<feature type="binding site" evidence="1">
    <location>
        <position position="279"/>
    </location>
    <ligand>
        <name>Mg(2+)</name>
        <dbReference type="ChEBI" id="CHEBI:18420"/>
    </ligand>
</feature>
<feature type="binding site" evidence="1">
    <location>
        <position position="291"/>
    </location>
    <ligand>
        <name>Mg(2+)</name>
        <dbReference type="ChEBI" id="CHEBI:18420"/>
    </ligand>
</feature>
<feature type="binding site" evidence="1">
    <location>
        <position position="298"/>
    </location>
    <ligand>
        <name>N(1)-(5-phospho-beta-D-ribosyl)glycinamide</name>
        <dbReference type="ChEBI" id="CHEBI:143788"/>
    </ligand>
</feature>
<feature type="binding site" evidence="1">
    <location>
        <position position="367"/>
    </location>
    <ligand>
        <name>N(1)-(5-phospho-beta-D-ribosyl)glycinamide</name>
        <dbReference type="ChEBI" id="CHEBI:143788"/>
    </ligand>
</feature>
<feature type="binding site" evidence="1">
    <location>
        <begin position="374"/>
        <end position="375"/>
    </location>
    <ligand>
        <name>N(1)-(5-phospho-beta-D-ribosyl)glycinamide</name>
        <dbReference type="ChEBI" id="CHEBI:143788"/>
    </ligand>
</feature>
<accession>Q7WEY0</accession>
<reference key="1">
    <citation type="journal article" date="2003" name="Nat. Genet.">
        <title>Comparative analysis of the genome sequences of Bordetella pertussis, Bordetella parapertussis and Bordetella bronchiseptica.</title>
        <authorList>
            <person name="Parkhill J."/>
            <person name="Sebaihia M."/>
            <person name="Preston A."/>
            <person name="Murphy L.D."/>
            <person name="Thomson N.R."/>
            <person name="Harris D.E."/>
            <person name="Holden M.T.G."/>
            <person name="Churcher C.M."/>
            <person name="Bentley S.D."/>
            <person name="Mungall K.L."/>
            <person name="Cerdeno-Tarraga A.-M."/>
            <person name="Temple L."/>
            <person name="James K.D."/>
            <person name="Harris B."/>
            <person name="Quail M.A."/>
            <person name="Achtman M."/>
            <person name="Atkin R."/>
            <person name="Baker S."/>
            <person name="Basham D."/>
            <person name="Bason N."/>
            <person name="Cherevach I."/>
            <person name="Chillingworth T."/>
            <person name="Collins M."/>
            <person name="Cronin A."/>
            <person name="Davis P."/>
            <person name="Doggett J."/>
            <person name="Feltwell T."/>
            <person name="Goble A."/>
            <person name="Hamlin N."/>
            <person name="Hauser H."/>
            <person name="Holroyd S."/>
            <person name="Jagels K."/>
            <person name="Leather S."/>
            <person name="Moule S."/>
            <person name="Norberczak H."/>
            <person name="O'Neil S."/>
            <person name="Ormond D."/>
            <person name="Price C."/>
            <person name="Rabbinowitsch E."/>
            <person name="Rutter S."/>
            <person name="Sanders M."/>
            <person name="Saunders D."/>
            <person name="Seeger K."/>
            <person name="Sharp S."/>
            <person name="Simmonds M."/>
            <person name="Skelton J."/>
            <person name="Squares R."/>
            <person name="Squares S."/>
            <person name="Stevens K."/>
            <person name="Unwin L."/>
            <person name="Whitehead S."/>
            <person name="Barrell B.G."/>
            <person name="Maskell D.J."/>
        </authorList>
    </citation>
    <scope>NUCLEOTIDE SEQUENCE [LARGE SCALE GENOMIC DNA]</scope>
    <source>
        <strain>ATCC BAA-588 / NCTC 13252 / RB50</strain>
    </source>
</reference>
<protein>
    <recommendedName>
        <fullName evidence="1">Formate-dependent phosphoribosylglycinamide formyltransferase</fullName>
        <ecNumber evidence="1">6.3.1.21</ecNumber>
    </recommendedName>
    <alternativeName>
        <fullName evidence="1">5'-phosphoribosylglycinamide transformylase 2</fullName>
    </alternativeName>
    <alternativeName>
        <fullName evidence="1">Formate-dependent GAR transformylase</fullName>
    </alternativeName>
    <alternativeName>
        <fullName evidence="1">GAR transformylase 2</fullName>
        <shortName evidence="1">GART 2</shortName>
    </alternativeName>
    <alternativeName>
        <fullName evidence="1">Non-folate glycinamide ribonucleotide transformylase</fullName>
    </alternativeName>
    <alternativeName>
        <fullName evidence="1">Phosphoribosylglycinamide formyltransferase 2</fullName>
    </alternativeName>
</protein>
<sequence>MSTFPAPVLGTPLSPTATRVMLLGAGELGKEVVIALQRLGVEVIAVDRYADAPGHQVAHRAHVVSMTDPQALRQVIEQERPHVVVPEIEAIATDLLVALEDEGAVRVTPTARAAHLTMNREGIRRLAAETLGLPTSPYRFVDTEQALREAIDGGIGYPCVIKPVMSSSGKGQSIIRSADDIAAAWRYAQEGGRVGAGRVIVEGFIEFDYEITLLTVRARGADGQIVTQFCEPIGHRQVDGDYVESWQPHPMSPAALQRSREIALAVTGDLGGLGIFGVELFVAGDQVWFSEVSPRPHDTGMVTLISQVQNEFELHARALLGLPVDTRLRQPGASSVIYGGVEARGVAFEGVAQALAEPGTDIRLFGKPESFAKRRMGVGLAVADDVDQARAKAARVSQAVRVRAGA</sequence>